<feature type="chain" id="PRO_0000287416" description="Type IV secretion system protein PtlG homolog">
    <location>
        <begin position="1"/>
        <end position="374"/>
    </location>
</feature>
<feature type="transmembrane region" description="Helical" evidence="1">
    <location>
        <begin position="38"/>
        <end position="56"/>
    </location>
</feature>
<feature type="region of interest" description="Disordered" evidence="2">
    <location>
        <begin position="87"/>
        <end position="116"/>
    </location>
</feature>
<feature type="compositionally biased region" description="Pro residues" evidence="2">
    <location>
        <begin position="92"/>
        <end position="116"/>
    </location>
</feature>
<protein>
    <recommendedName>
        <fullName>Type IV secretion system protein PtlG homolog</fullName>
    </recommendedName>
</protein>
<gene>
    <name type="primary">ptlG</name>
    <name type="ordered locus">BPP4315</name>
</gene>
<sequence>MLNRPSSPDGGEAHAWPPDPEIPVFANAEHAHRRPLRWMFALVAVALSCLLATGIWRSRAAPPHAATQTVAPAGQALPPGRMFTVHPREPEPAPLPDMPAAPNPILPQPRPAPPVPPPPIRAPYDYDEPAPRRDSAALKSGPAMMVATAARLGQTERAGMAEDGVSADAATLIGRSVSRATRSGGRDYRLLPGTFIDCILQTRIVTNVPGLTTCIVSRDVYSASGKRVLVPRGTTVVGEYRADLAQGSQRIYVAWSRLFMPSGLTIELASPAVDGTGAAGLPGVVDDKFAQRFGGALLLSVLGDATSYMLARATDARHGVNVNLTAAGTMNSLAASALNNTINIPPTLYKNHGDQIGILVARPLDFSILRGTNE</sequence>
<proteinExistence type="inferred from homology"/>
<accession>Q7W2T8</accession>
<evidence type="ECO:0000255" key="1"/>
<evidence type="ECO:0000256" key="2">
    <source>
        <dbReference type="SAM" id="MobiDB-lite"/>
    </source>
</evidence>
<evidence type="ECO:0000305" key="3"/>
<comment type="subcellular location">
    <subcellularLocation>
        <location evidence="3">Cell membrane</location>
        <topology evidence="3">Single-pass membrane protein</topology>
    </subcellularLocation>
</comment>
<comment type="similarity">
    <text evidence="3">Belongs to the TrbI/VirB10 family.</text>
</comment>
<comment type="caution">
    <text evidence="3">B.parapertussis and B.bronchiseptica seem not to produce the pertussis toxin (S1, S2, S4, S5 and S3) and Ptl proteins (PtlA, PtlB, PtlC, PtlD, PtlE, PtlF, PtlG, PtlH and PtlI) in vivo due to changes in the promoter region of the ptx-ptl operon. However, it is possible that their promoter is active under certain, as-yet-undefined conditions and that B.parapertussis and B.bronchiseptica are therefore capable of producing these proteins.</text>
</comment>
<reference key="1">
    <citation type="journal article" date="2003" name="Nat. Genet.">
        <title>Comparative analysis of the genome sequences of Bordetella pertussis, Bordetella parapertussis and Bordetella bronchiseptica.</title>
        <authorList>
            <person name="Parkhill J."/>
            <person name="Sebaihia M."/>
            <person name="Preston A."/>
            <person name="Murphy L.D."/>
            <person name="Thomson N.R."/>
            <person name="Harris D.E."/>
            <person name="Holden M.T.G."/>
            <person name="Churcher C.M."/>
            <person name="Bentley S.D."/>
            <person name="Mungall K.L."/>
            <person name="Cerdeno-Tarraga A.-M."/>
            <person name="Temple L."/>
            <person name="James K.D."/>
            <person name="Harris B."/>
            <person name="Quail M.A."/>
            <person name="Achtman M."/>
            <person name="Atkin R."/>
            <person name="Baker S."/>
            <person name="Basham D."/>
            <person name="Bason N."/>
            <person name="Cherevach I."/>
            <person name="Chillingworth T."/>
            <person name="Collins M."/>
            <person name="Cronin A."/>
            <person name="Davis P."/>
            <person name="Doggett J."/>
            <person name="Feltwell T."/>
            <person name="Goble A."/>
            <person name="Hamlin N."/>
            <person name="Hauser H."/>
            <person name="Holroyd S."/>
            <person name="Jagels K."/>
            <person name="Leather S."/>
            <person name="Moule S."/>
            <person name="Norberczak H."/>
            <person name="O'Neil S."/>
            <person name="Ormond D."/>
            <person name="Price C."/>
            <person name="Rabbinowitsch E."/>
            <person name="Rutter S."/>
            <person name="Sanders M."/>
            <person name="Saunders D."/>
            <person name="Seeger K."/>
            <person name="Sharp S."/>
            <person name="Simmonds M."/>
            <person name="Skelton J."/>
            <person name="Squares R."/>
            <person name="Squares S."/>
            <person name="Stevens K."/>
            <person name="Unwin L."/>
            <person name="Whitehead S."/>
            <person name="Barrell B.G."/>
            <person name="Maskell D.J."/>
        </authorList>
    </citation>
    <scope>NUCLEOTIDE SEQUENCE [LARGE SCALE GENOMIC DNA]</scope>
    <source>
        <strain>12822 / ATCC BAA-587 / NCTC 13253</strain>
    </source>
</reference>
<reference key="2">
    <citation type="journal article" date="1987" name="J. Bacteriol.">
        <title>Bordetella parapertussis and Bordetella bronchiseptica contain transcriptionally silent pertussis toxin genes.</title>
        <authorList>
            <person name="Arico B."/>
            <person name="Rappuoli R."/>
        </authorList>
    </citation>
    <scope>TRANSCRIPTIONAL SILENCING</scope>
    <source>
        <strain>ATCC 9305</strain>
    </source>
</reference>
<reference key="3">
    <citation type="journal article" date="1996" name="Infect. Immun.">
        <title>Analysis of proteins encoded by the ptx and ptl genes of Bordetella bronchiseptica and Bordetella parapertussis.</title>
        <authorList>
            <person name="Hausman S.Z."/>
            <person name="Cherry J.D."/>
            <person name="Heininger U."/>
            <person name="Wirsing von Koenig C.H."/>
            <person name="Burns D.L."/>
        </authorList>
    </citation>
    <scope>POSSIBLE EXPRESSION OF PTL AND PTX PROTEINS UNDER CONDITIONS DIFFERENT FROM B.PERTUSSIS EXPRESSION CONDITIONS</scope>
    <source>
        <strain>10978</strain>
        <strain>13449</strain>
    </source>
</reference>
<organism>
    <name type="scientific">Bordetella parapertussis (strain 12822 / ATCC BAA-587 / NCTC 13253)</name>
    <dbReference type="NCBI Taxonomy" id="257311"/>
    <lineage>
        <taxon>Bacteria</taxon>
        <taxon>Pseudomonadati</taxon>
        <taxon>Pseudomonadota</taxon>
        <taxon>Betaproteobacteria</taxon>
        <taxon>Burkholderiales</taxon>
        <taxon>Alcaligenaceae</taxon>
        <taxon>Bordetella</taxon>
    </lineage>
</organism>
<name>PTLG_BORPA</name>
<keyword id="KW-1003">Cell membrane</keyword>
<keyword id="KW-0472">Membrane</keyword>
<keyword id="KW-0812">Transmembrane</keyword>
<keyword id="KW-1133">Transmembrane helix</keyword>
<dbReference type="EMBL" id="BX640436">
    <property type="protein sequence ID" value="CAE39594.1"/>
    <property type="molecule type" value="Genomic_DNA"/>
</dbReference>
<dbReference type="RefSeq" id="WP_010929499.1">
    <property type="nucleotide sequence ID" value="NC_002928.3"/>
</dbReference>
<dbReference type="SMR" id="Q7W2T8"/>
<dbReference type="GeneID" id="93206114"/>
<dbReference type="KEGG" id="bpa:BPP4315"/>
<dbReference type="HOGENOM" id="CLU_041899_7_0_4"/>
<dbReference type="Proteomes" id="UP000001421">
    <property type="component" value="Chromosome"/>
</dbReference>
<dbReference type="GO" id="GO:0005886">
    <property type="term" value="C:plasma membrane"/>
    <property type="evidence" value="ECO:0007669"/>
    <property type="project" value="UniProtKB-SubCell"/>
</dbReference>
<dbReference type="CDD" id="cd16429">
    <property type="entry name" value="VirB10"/>
    <property type="match status" value="1"/>
</dbReference>
<dbReference type="Gene3D" id="2.40.128.260">
    <property type="entry name" value="Type IV secretion system, VirB10/TraB/TrbI"/>
    <property type="match status" value="1"/>
</dbReference>
<dbReference type="InterPro" id="IPR047695">
    <property type="entry name" value="T4SS_VirB10/PtlG"/>
</dbReference>
<dbReference type="InterPro" id="IPR005498">
    <property type="entry name" value="T4SS_VirB10/TraB/TrbI"/>
</dbReference>
<dbReference type="InterPro" id="IPR042217">
    <property type="entry name" value="T4SS_VirB10/TrbI"/>
</dbReference>
<dbReference type="NCBIfam" id="NF038091">
    <property type="entry name" value="T4SS_VirB10"/>
    <property type="match status" value="1"/>
</dbReference>
<dbReference type="Pfam" id="PF03743">
    <property type="entry name" value="TrbI"/>
    <property type="match status" value="1"/>
</dbReference>